<dbReference type="EMBL" id="AX097834">
    <property type="status" value="NOT_ANNOTATED_CDS"/>
    <property type="molecule type" value="Genomic_DNA"/>
</dbReference>
<dbReference type="EMBL" id="AC153637">
    <property type="status" value="NOT_ANNOTATED_CDS"/>
    <property type="molecule type" value="Genomic_DNA"/>
</dbReference>
<dbReference type="EMBL" id="BC104401">
    <property type="protein sequence ID" value="AAI04402.1"/>
    <property type="molecule type" value="mRNA"/>
</dbReference>
<dbReference type="EMBL" id="BK001069">
    <property type="protein sequence ID" value="DAA01208.1"/>
    <property type="molecule type" value="Genomic_DNA"/>
</dbReference>
<dbReference type="CCDS" id="CCDS19939.1"/>
<dbReference type="RefSeq" id="NP_996905.1">
    <property type="nucleotide sequence ID" value="NM_207022.1"/>
</dbReference>
<dbReference type="SMR" id="P59529"/>
<dbReference type="FunCoup" id="P59529">
    <property type="interactions" value="141"/>
</dbReference>
<dbReference type="STRING" id="10090.ENSMUSP00000053700"/>
<dbReference type="GlyCosmos" id="P59529">
    <property type="glycosylation" value="1 site, No reported glycans"/>
</dbReference>
<dbReference type="GlyGen" id="P59529">
    <property type="glycosylation" value="1 site"/>
</dbReference>
<dbReference type="PhosphoSitePlus" id="P59529"/>
<dbReference type="PaxDb" id="10090-ENSMUSP00000053700"/>
<dbReference type="Antibodypedia" id="31744">
    <property type="antibodies" value="62 antibodies from 16 providers"/>
</dbReference>
<dbReference type="DNASU" id="387347"/>
<dbReference type="Ensembl" id="ENSMUST00000062463.4">
    <property type="protein sequence ID" value="ENSMUSP00000053700.4"/>
    <property type="gene ID" value="ENSMUSG00000043865.4"/>
</dbReference>
<dbReference type="GeneID" id="387347"/>
<dbReference type="KEGG" id="mmu:387347"/>
<dbReference type="UCSC" id="uc009bbn.1">
    <property type="organism name" value="mouse"/>
</dbReference>
<dbReference type="AGR" id="MGI:2681247"/>
<dbReference type="CTD" id="387347"/>
<dbReference type="MGI" id="MGI:2681247">
    <property type="gene designation" value="Tas2r118"/>
</dbReference>
<dbReference type="VEuPathDB" id="HostDB:ENSMUSG00000043865"/>
<dbReference type="eggNOG" id="ENOG502S2SI">
    <property type="taxonomic scope" value="Eukaryota"/>
</dbReference>
<dbReference type="GeneTree" id="ENSGT01100000263477"/>
<dbReference type="HOGENOM" id="CLU_072337_1_1_1"/>
<dbReference type="InParanoid" id="P59529"/>
<dbReference type="OMA" id="REWVQVK"/>
<dbReference type="OrthoDB" id="9834076at2759"/>
<dbReference type="PhylomeDB" id="P59529"/>
<dbReference type="TreeFam" id="TF335891"/>
<dbReference type="Reactome" id="R-MMU-418594">
    <property type="pathway name" value="G alpha (i) signalling events"/>
</dbReference>
<dbReference type="Reactome" id="R-MMU-420499">
    <property type="pathway name" value="Class C/3 (Metabotropic glutamate/pheromone receptors)"/>
</dbReference>
<dbReference type="Reactome" id="R-MMU-9717207">
    <property type="pathway name" value="Sensory perception of sweet, bitter, and umami (glutamate) taste"/>
</dbReference>
<dbReference type="BioGRID-ORCS" id="387347">
    <property type="hits" value="1 hit in 76 CRISPR screens"/>
</dbReference>
<dbReference type="PRO" id="PR:P59529"/>
<dbReference type="Proteomes" id="UP000000589">
    <property type="component" value="Chromosome 6"/>
</dbReference>
<dbReference type="RNAct" id="P59529">
    <property type="molecule type" value="protein"/>
</dbReference>
<dbReference type="GO" id="GO:0005783">
    <property type="term" value="C:endoplasmic reticulum"/>
    <property type="evidence" value="ECO:0007669"/>
    <property type="project" value="Ensembl"/>
</dbReference>
<dbReference type="GO" id="GO:0009897">
    <property type="term" value="C:external side of plasma membrane"/>
    <property type="evidence" value="ECO:0007669"/>
    <property type="project" value="Ensembl"/>
</dbReference>
<dbReference type="GO" id="GO:0005802">
    <property type="term" value="C:trans-Golgi network"/>
    <property type="evidence" value="ECO:0007669"/>
    <property type="project" value="Ensembl"/>
</dbReference>
<dbReference type="GO" id="GO:0033038">
    <property type="term" value="F:bitter taste receptor activity"/>
    <property type="evidence" value="ECO:0007669"/>
    <property type="project" value="Ensembl"/>
</dbReference>
<dbReference type="GO" id="GO:0004930">
    <property type="term" value="F:G protein-coupled receptor activity"/>
    <property type="evidence" value="ECO:0007669"/>
    <property type="project" value="UniProtKB-KW"/>
</dbReference>
<dbReference type="GO" id="GO:0001580">
    <property type="term" value="P:detection of chemical stimulus involved in sensory perception of bitter taste"/>
    <property type="evidence" value="ECO:0000304"/>
    <property type="project" value="MGI"/>
</dbReference>
<dbReference type="CDD" id="cd15017">
    <property type="entry name" value="7tm_TAS2R16"/>
    <property type="match status" value="1"/>
</dbReference>
<dbReference type="FunFam" id="1.20.1070.10:FF:000055">
    <property type="entry name" value="Taste receptor type 2"/>
    <property type="match status" value="1"/>
</dbReference>
<dbReference type="InterPro" id="IPR007960">
    <property type="entry name" value="TAS2R"/>
</dbReference>
<dbReference type="PANTHER" id="PTHR11394">
    <property type="entry name" value="TASTE RECEPTOR TYPE 2"/>
    <property type="match status" value="1"/>
</dbReference>
<dbReference type="PANTHER" id="PTHR11394:SF68">
    <property type="entry name" value="TASTE RECEPTOR TYPE 2 MEMBER 16"/>
    <property type="match status" value="1"/>
</dbReference>
<dbReference type="Pfam" id="PF05296">
    <property type="entry name" value="TAS2R"/>
    <property type="match status" value="1"/>
</dbReference>
<dbReference type="SUPFAM" id="SSF81321">
    <property type="entry name" value="Family A G protein-coupled receptor-like"/>
    <property type="match status" value="1"/>
</dbReference>
<reference key="1">
    <citation type="patent" date="2001-03-15" number="WO0118050">
        <title>T2r taste receptor family.</title>
        <authorList>
            <person name="Zuker C.S."/>
            <person name="Adler J.E."/>
            <person name="Ryba N."/>
            <person name="Mueller K."/>
            <person name="Hoon M."/>
        </authorList>
    </citation>
    <scope>NUCLEOTIDE SEQUENCE [GENOMIC DNA]</scope>
</reference>
<reference key="2">
    <citation type="journal article" date="2009" name="PLoS Biol.">
        <title>Lineage-specific biology revealed by a finished genome assembly of the mouse.</title>
        <authorList>
            <person name="Church D.M."/>
            <person name="Goodstadt L."/>
            <person name="Hillier L.W."/>
            <person name="Zody M.C."/>
            <person name="Goldstein S."/>
            <person name="She X."/>
            <person name="Bult C.J."/>
            <person name="Agarwala R."/>
            <person name="Cherry J.L."/>
            <person name="DiCuccio M."/>
            <person name="Hlavina W."/>
            <person name="Kapustin Y."/>
            <person name="Meric P."/>
            <person name="Maglott D."/>
            <person name="Birtle Z."/>
            <person name="Marques A.C."/>
            <person name="Graves T."/>
            <person name="Zhou S."/>
            <person name="Teague B."/>
            <person name="Potamousis K."/>
            <person name="Churas C."/>
            <person name="Place M."/>
            <person name="Herschleb J."/>
            <person name="Runnheim R."/>
            <person name="Forrest D."/>
            <person name="Amos-Landgraf J."/>
            <person name="Schwartz D.C."/>
            <person name="Cheng Z."/>
            <person name="Lindblad-Toh K."/>
            <person name="Eichler E.E."/>
            <person name="Ponting C.P."/>
        </authorList>
    </citation>
    <scope>NUCLEOTIDE SEQUENCE [LARGE SCALE GENOMIC DNA]</scope>
    <source>
        <strain>C57BL/6J</strain>
    </source>
</reference>
<reference key="3">
    <citation type="journal article" date="2004" name="Genome Res.">
        <title>The status, quality, and expansion of the NIH full-length cDNA project: the Mammalian Gene Collection (MGC).</title>
        <authorList>
            <consortium name="The MGC Project Team"/>
        </authorList>
    </citation>
    <scope>NUCLEOTIDE SEQUENCE [LARGE SCALE MRNA]</scope>
</reference>
<reference key="4">
    <citation type="journal article" date="2003" name="Mol. Biol. Evol.">
        <title>Adaptive diversification of bitter taste receptor genes in mammalian evolution.</title>
        <authorList>
            <person name="Shi P."/>
            <person name="Zhang J."/>
            <person name="Yang H."/>
            <person name="Zhang Y.-P."/>
        </authorList>
    </citation>
    <scope>IDENTIFICATION</scope>
</reference>
<reference key="5">
    <citation type="journal article" date="2002" name="Curr. Opin. Neurobiol.">
        <title>Receptors for bitter and sweet taste.</title>
        <authorList>
            <person name="Montmayeur J.-P."/>
            <person name="Matsunami H."/>
        </authorList>
    </citation>
    <scope>REVIEW</scope>
</reference>
<reference key="6">
    <citation type="journal article" date="2002" name="J. Biol. Chem.">
        <title>Molecular mechanisms of bitter and sweet taste transduction.</title>
        <authorList>
            <person name="Margolskee R.F."/>
        </authorList>
    </citation>
    <scope>REVIEW</scope>
</reference>
<reference key="7">
    <citation type="journal article" date="2003" name="Cell">
        <title>Coding of sweet, bitter, and umami tastes: different receptor cells sharing similar signaling pathways.</title>
        <authorList>
            <person name="Zhang Y."/>
            <person name="Hoon M.A."/>
            <person name="Chandrashekar J."/>
            <person name="Mueller K.L."/>
            <person name="Cook B."/>
            <person name="Wu D."/>
            <person name="Zuker C.S."/>
            <person name="Ryba N.J."/>
        </authorList>
    </citation>
    <scope>REVIEW</scope>
</reference>
<feature type="chain" id="PRO_0000082267" description="Taste receptor type 2 member 16">
    <location>
        <begin position="1"/>
        <end position="299"/>
    </location>
</feature>
<feature type="topological domain" description="Extracellular" evidence="3">
    <location>
        <begin position="1"/>
        <end position="5"/>
    </location>
</feature>
<feature type="transmembrane region" description="Helical; Name=1" evidence="3">
    <location>
        <begin position="6"/>
        <end position="26"/>
    </location>
</feature>
<feature type="topological domain" description="Cytoplasmic" evidence="3">
    <location>
        <begin position="27"/>
        <end position="47"/>
    </location>
</feature>
<feature type="transmembrane region" description="Helical; Name=2" evidence="3">
    <location>
        <begin position="48"/>
        <end position="68"/>
    </location>
</feature>
<feature type="topological domain" description="Extracellular" evidence="3">
    <location>
        <begin position="69"/>
        <end position="82"/>
    </location>
</feature>
<feature type="transmembrane region" description="Helical; Name=3" evidence="3">
    <location>
        <begin position="83"/>
        <end position="103"/>
    </location>
</feature>
<feature type="topological domain" description="Cytoplasmic" evidence="3">
    <location>
        <begin position="104"/>
        <end position="125"/>
    </location>
</feature>
<feature type="transmembrane region" description="Helical; Name=4" evidence="3">
    <location>
        <begin position="126"/>
        <end position="146"/>
    </location>
</feature>
<feature type="topological domain" description="Extracellular" evidence="3">
    <location>
        <begin position="147"/>
        <end position="183"/>
    </location>
</feature>
<feature type="transmembrane region" description="Helical; Name=5" evidence="3">
    <location>
        <begin position="184"/>
        <end position="204"/>
    </location>
</feature>
<feature type="topological domain" description="Cytoplasmic" evidence="3">
    <location>
        <begin position="205"/>
        <end position="233"/>
    </location>
</feature>
<feature type="transmembrane region" description="Helical; Name=6" evidence="3">
    <location>
        <begin position="234"/>
        <end position="254"/>
    </location>
</feature>
<feature type="topological domain" description="Extracellular" evidence="3">
    <location>
        <begin position="255"/>
        <end position="258"/>
    </location>
</feature>
<feature type="transmembrane region" description="Helical; Name=7" evidence="3">
    <location>
        <begin position="259"/>
        <end position="279"/>
    </location>
</feature>
<feature type="topological domain" description="Cytoplasmic" evidence="3">
    <location>
        <begin position="280"/>
        <end position="299"/>
    </location>
</feature>
<feature type="glycosylation site" description="N-linked (GlcNAc...) asparagine" evidence="3">
    <location>
        <position position="163"/>
    </location>
</feature>
<evidence type="ECO:0000250" key="1"/>
<evidence type="ECO:0000250" key="2">
    <source>
        <dbReference type="UniProtKB" id="Q9NYV7"/>
    </source>
</evidence>
<evidence type="ECO:0000255" key="3"/>
<evidence type="ECO:0000305" key="4"/>
<gene>
    <name type="primary">Tas2r16</name>
    <name type="synonym">Tas2r118</name>
    <name type="synonym">Tas2r18</name>
</gene>
<accession>P59529</accession>
<accession>Q7M728</accession>
<protein>
    <recommendedName>
        <fullName>Taste receptor type 2 member 16</fullName>
        <shortName>T2R16</shortName>
    </recommendedName>
    <alternativeName>
        <fullName>Candidate taste receptor mt2r40</fullName>
    </alternativeName>
    <alternativeName>
        <fullName>T2R18</fullName>
    </alternativeName>
</protein>
<sequence length="299" mass="34761">MVPTQVTIFSIIMYVLESLVIIVQSCTTVAVLFREWMHFQRLSPVETILISLGISHFCLQWTSMLYNFGTYSRPVLLFWKVSVVWEFMNILTFWLTSWLAVLYCVKVSSFTHPIFLWLRMKILKLVLWLILGALIASCLSIIPSVVKYHIQMELVTLDNLPKNNSLILRLQQFEWYFSNPLKMIGFGIPFFVFLASIILLTVSLVQHWVQMKHYSSSNSSLKAQFTVLKSLATFFTFFTSYFLTIVISFIGTVFDKKSWFWVCEAVIYGLVCIHFTSLMMSNPALKKALKLQFWSPEPS</sequence>
<comment type="function">
    <text evidence="1">Gustducin-coupled receptor implicated in the perception of bitter compounds in the oral cavity and the gastrointestinal tract. Signals through PLCB2 and the calcium-regulated cation channel TRPM5 (By similarity).</text>
</comment>
<comment type="subunit">
    <text evidence="2">Interacts with RTP3 and RTP4.</text>
</comment>
<comment type="subcellular location">
    <subcellularLocation>
        <location evidence="2">Cell membrane</location>
        <topology evidence="3">Multi-pass membrane protein</topology>
    </subcellularLocation>
</comment>
<comment type="miscellaneous">
    <text>Several bitter taste receptors are expressed in a single taste receptor cell.</text>
</comment>
<comment type="similarity">
    <text evidence="4">Belongs to the G-protein coupled receptor T2R family.</text>
</comment>
<organism>
    <name type="scientific">Mus musculus</name>
    <name type="common">Mouse</name>
    <dbReference type="NCBI Taxonomy" id="10090"/>
    <lineage>
        <taxon>Eukaryota</taxon>
        <taxon>Metazoa</taxon>
        <taxon>Chordata</taxon>
        <taxon>Craniata</taxon>
        <taxon>Vertebrata</taxon>
        <taxon>Euteleostomi</taxon>
        <taxon>Mammalia</taxon>
        <taxon>Eutheria</taxon>
        <taxon>Euarchontoglires</taxon>
        <taxon>Glires</taxon>
        <taxon>Rodentia</taxon>
        <taxon>Myomorpha</taxon>
        <taxon>Muroidea</taxon>
        <taxon>Muridae</taxon>
        <taxon>Murinae</taxon>
        <taxon>Mus</taxon>
        <taxon>Mus</taxon>
    </lineage>
</organism>
<name>T2R16_MOUSE</name>
<proteinExistence type="evidence at transcript level"/>
<keyword id="KW-1003">Cell membrane</keyword>
<keyword id="KW-0297">G-protein coupled receptor</keyword>
<keyword id="KW-0325">Glycoprotein</keyword>
<keyword id="KW-0472">Membrane</keyword>
<keyword id="KW-0675">Receptor</keyword>
<keyword id="KW-1185">Reference proteome</keyword>
<keyword id="KW-0716">Sensory transduction</keyword>
<keyword id="KW-0919">Taste</keyword>
<keyword id="KW-0807">Transducer</keyword>
<keyword id="KW-0812">Transmembrane</keyword>
<keyword id="KW-1133">Transmembrane helix</keyword>